<protein>
    <recommendedName>
        <fullName evidence="5">Germacrene A synthase</fullName>
        <shortName evidence="5">LvGEAS</shortName>
        <ecNumber evidence="4">4.2.3.-</ecNumber>
    </recommendedName>
    <alternativeName>
        <fullName evidence="5">Beta-elemene synthase</fullName>
        <ecNumber evidence="4">4.2.3.-</ecNumber>
    </alternativeName>
</protein>
<name>GEAS_LAVVI</name>
<reference key="1">
    <citation type="journal article" date="2015" name="Physiol. Plantarum">
        <title>Functional characterization of terpene synthases and chemotypic variation in three lavender species of section Stoechas.</title>
        <authorList>
            <person name="Benabdelkader T."/>
            <person name="Guitton Y."/>
            <person name="Pasquier B."/>
            <person name="Magnard J.L."/>
            <person name="Jullien F."/>
            <person name="Kameli A."/>
            <person name="Legendre L."/>
        </authorList>
    </citation>
    <scope>NUCLEOTIDE SEQUENCE [MRNA]</scope>
    <scope>FUNCTION</scope>
    <scope>CATALYTIC ACTIVITY</scope>
    <scope>PATHWAY</scope>
    <scope>TISSUE SPECIFICITY</scope>
    <source>
        <tissue>Leaf</tissue>
    </source>
</reference>
<sequence length="543" mass="63826">MAQQEAEILRPLANFSPSLWGDQFIKNDSDAKVRYIFHYVDYTNLSMLTATGTKMVDTMNLIDTLERLGVSYHFEHEIEEILQQFFNLNTDYNDEAYDLYTVATHFRLFRQHGHRITCADIFGRWRDENGKFHEGLKDDAKGLLSLYEASYLRTRGETILDEALDFTTASLKSIAPNLESPLRRQVEHALVQQLHWGNPRIEARNFISLYEEYEDKDESLLRFAKLDYNLLQMMHKEELHEVSRWWKELDLVAKLPYARDRVVECFFWAMGVYHEPQYSRARVMLTKTIAMTSIIDDTYDAYGTIEELDIFTEAIERWNVEEMKRLPEYIKPFYKALLELYEQFEEELAKEGRSYATHYAIESLKELVRSYHVEAKWFIQGYLPPFEEYLKNALITCTYCYHTTTSLLGVESAVREDFEWLSKKPKMLVAGLLICRVIDDIATYEVEKDRGQIATGIESYMRDNGATKEEAITKFFEIANDAWKDINEECMRPSPHSRDVLMRILNLERIIDVTYKGNEDGYTQPEKVLKPHIIALFVDPIQI</sequence>
<evidence type="ECO:0000250" key="1">
    <source>
        <dbReference type="UniProtKB" id="A0A1C9J6A7"/>
    </source>
</evidence>
<evidence type="ECO:0000250" key="2">
    <source>
        <dbReference type="UniProtKB" id="Q40577"/>
    </source>
</evidence>
<evidence type="ECO:0000255" key="3"/>
<evidence type="ECO:0000269" key="4">
    <source>
    </source>
</evidence>
<evidence type="ECO:0000303" key="5">
    <source>
    </source>
</evidence>
<evidence type="ECO:0000305" key="6"/>
<feature type="chain" id="PRO_0000454963" description="Germacrene A synthase">
    <location>
        <begin position="1"/>
        <end position="543"/>
    </location>
</feature>
<feature type="short sequence motif" description="DDXXD motif" evidence="1">
    <location>
        <begin position="296"/>
        <end position="300"/>
    </location>
</feature>
<feature type="binding site" evidence="2">
    <location>
        <position position="296"/>
    </location>
    <ligand>
        <name>Mg(2+)</name>
        <dbReference type="ChEBI" id="CHEBI:18420"/>
        <label>1</label>
    </ligand>
</feature>
<feature type="binding site" evidence="2">
    <location>
        <position position="296"/>
    </location>
    <ligand>
        <name>Mg(2+)</name>
        <dbReference type="ChEBI" id="CHEBI:18420"/>
        <label>2</label>
    </ligand>
</feature>
<feature type="binding site" evidence="2">
    <location>
        <position position="300"/>
    </location>
    <ligand>
        <name>Mg(2+)</name>
        <dbReference type="ChEBI" id="CHEBI:18420"/>
        <label>1</label>
    </ligand>
</feature>
<feature type="binding site" evidence="2">
    <location>
        <position position="300"/>
    </location>
    <ligand>
        <name>Mg(2+)</name>
        <dbReference type="ChEBI" id="CHEBI:18420"/>
        <label>2</label>
    </ligand>
</feature>
<feature type="binding site" evidence="2">
    <location>
        <position position="439"/>
    </location>
    <ligand>
        <name>Mg(2+)</name>
        <dbReference type="ChEBI" id="CHEBI:18420"/>
        <label>3</label>
    </ligand>
</feature>
<feature type="binding site" evidence="2">
    <location>
        <position position="447"/>
    </location>
    <ligand>
        <name>Mg(2+)</name>
        <dbReference type="ChEBI" id="CHEBI:18420"/>
        <label>3</label>
    </ligand>
</feature>
<comment type="function">
    <text evidence="4">Sesquiterpene synthase involved in the biosynthesis of volatile compounds widely used in aromatherapy and folk medicine, and present in culinary herbs (PubMed:24943828). Mediates the conversion of (2E,6E)-farnesyl diphosphate (FPP) into germacrene A and beta-elemene (PubMed:24943828). Not able to use (2E)-geranyl diphosphate (GPP) as substrate (PubMed:24943828).</text>
</comment>
<comment type="catalytic activity">
    <reaction evidence="4">
        <text>(2E,6E)-farnesyl diphosphate = germacrene A + diphosphate</text>
        <dbReference type="Rhea" id="RHEA:25452"/>
        <dbReference type="ChEBI" id="CHEBI:33019"/>
        <dbReference type="ChEBI" id="CHEBI:36517"/>
        <dbReference type="ChEBI" id="CHEBI:175763"/>
    </reaction>
    <physiologicalReaction direction="left-to-right" evidence="4">
        <dbReference type="Rhea" id="RHEA:25453"/>
    </physiologicalReaction>
</comment>
<comment type="catalytic activity">
    <reaction evidence="4">
        <text>(2E,6E)-farnesyl diphosphate = (1S,2S,4R)-beta-elemene + diphosphate</text>
        <dbReference type="Rhea" id="RHEA:68712"/>
        <dbReference type="ChEBI" id="CHEBI:33019"/>
        <dbReference type="ChEBI" id="CHEBI:62855"/>
        <dbReference type="ChEBI" id="CHEBI:175763"/>
    </reaction>
    <physiologicalReaction direction="left-to-right" evidence="4">
        <dbReference type="Rhea" id="RHEA:68713"/>
    </physiologicalReaction>
</comment>
<comment type="cofactor">
    <cofactor evidence="1">
        <name>Mg(2+)</name>
        <dbReference type="ChEBI" id="CHEBI:18420"/>
    </cofactor>
    <cofactor evidence="1">
        <name>Mn(2+)</name>
        <dbReference type="ChEBI" id="CHEBI:29035"/>
    </cofactor>
    <text evidence="1">Binds 3 Mg(2+) or Mn(2+) ions per subunit.</text>
</comment>
<comment type="pathway">
    <text evidence="4">Secondary metabolite biosynthesis; terpenoid biosynthesis.</text>
</comment>
<comment type="subcellular location">
    <subcellularLocation>
        <location evidence="3">Plastid</location>
        <location evidence="3">Chloroplast</location>
    </subcellularLocation>
</comment>
<comment type="tissue specificity">
    <text evidence="4">Barely detectable in leaves.</text>
</comment>
<comment type="domain">
    <text evidence="2">The Asp-Asp-Xaa-Xaa-Asp/Glu (DDXXD/E) motif is important for the catalytic activity, presumably through binding to Mg(2+).</text>
</comment>
<comment type="similarity">
    <text evidence="6">Belongs to the terpene synthase family. Tpsa subfamily.</text>
</comment>
<dbReference type="EC" id="4.2.3.-" evidence="4"/>
<dbReference type="EMBL" id="JX501519">
    <property type="protein sequence ID" value="AGN72806.1"/>
    <property type="molecule type" value="mRNA"/>
</dbReference>
<dbReference type="SMR" id="T1RRJ6"/>
<dbReference type="BRENDA" id="4.2.3.23">
    <property type="organism ID" value="13953"/>
</dbReference>
<dbReference type="UniPathway" id="UPA00213"/>
<dbReference type="GO" id="GO:0009507">
    <property type="term" value="C:chloroplast"/>
    <property type="evidence" value="ECO:0007669"/>
    <property type="project" value="UniProtKB-SubCell"/>
</dbReference>
<dbReference type="GO" id="GO:0102889">
    <property type="term" value="F:beta-elemene synthase activity"/>
    <property type="evidence" value="ECO:0000314"/>
    <property type="project" value="UniProtKB"/>
</dbReference>
<dbReference type="GO" id="GO:0034005">
    <property type="term" value="F:germacrene-A synthase activity"/>
    <property type="evidence" value="ECO:0000314"/>
    <property type="project" value="UniProtKB"/>
</dbReference>
<dbReference type="GO" id="GO:0016829">
    <property type="term" value="F:lyase activity"/>
    <property type="evidence" value="ECO:0000314"/>
    <property type="project" value="UniProtKB"/>
</dbReference>
<dbReference type="GO" id="GO:0000287">
    <property type="term" value="F:magnesium ion binding"/>
    <property type="evidence" value="ECO:0007669"/>
    <property type="project" value="InterPro"/>
</dbReference>
<dbReference type="GO" id="GO:0010333">
    <property type="term" value="F:terpene synthase activity"/>
    <property type="evidence" value="ECO:0000314"/>
    <property type="project" value="UniProtKB"/>
</dbReference>
<dbReference type="GO" id="GO:0016102">
    <property type="term" value="P:diterpenoid biosynthetic process"/>
    <property type="evidence" value="ECO:0007669"/>
    <property type="project" value="InterPro"/>
</dbReference>
<dbReference type="GO" id="GO:0010597">
    <property type="term" value="P:green leaf volatile biosynthetic process"/>
    <property type="evidence" value="ECO:0000314"/>
    <property type="project" value="UniProtKB"/>
</dbReference>
<dbReference type="GO" id="GO:0051762">
    <property type="term" value="P:sesquiterpene biosynthetic process"/>
    <property type="evidence" value="ECO:0000314"/>
    <property type="project" value="UniProtKB"/>
</dbReference>
<dbReference type="CDD" id="cd00684">
    <property type="entry name" value="Terpene_cyclase_plant_C1"/>
    <property type="match status" value="1"/>
</dbReference>
<dbReference type="FunFam" id="1.10.600.10:FF:000007">
    <property type="entry name" value="Isoprene synthase, chloroplastic"/>
    <property type="match status" value="1"/>
</dbReference>
<dbReference type="FunFam" id="1.50.10.130:FF:000001">
    <property type="entry name" value="Isoprene synthase, chloroplastic"/>
    <property type="match status" value="1"/>
</dbReference>
<dbReference type="Gene3D" id="1.10.600.10">
    <property type="entry name" value="Farnesyl Diphosphate Synthase"/>
    <property type="match status" value="1"/>
</dbReference>
<dbReference type="Gene3D" id="1.50.10.130">
    <property type="entry name" value="Terpene synthase, N-terminal domain"/>
    <property type="match status" value="1"/>
</dbReference>
<dbReference type="InterPro" id="IPR008949">
    <property type="entry name" value="Isoprenoid_synthase_dom_sf"/>
</dbReference>
<dbReference type="InterPro" id="IPR034741">
    <property type="entry name" value="Terpene_cyclase-like_1_C"/>
</dbReference>
<dbReference type="InterPro" id="IPR044814">
    <property type="entry name" value="Terpene_cyclase_plant_C1"/>
</dbReference>
<dbReference type="InterPro" id="IPR001906">
    <property type="entry name" value="Terpene_synth_N"/>
</dbReference>
<dbReference type="InterPro" id="IPR036965">
    <property type="entry name" value="Terpene_synth_N_sf"/>
</dbReference>
<dbReference type="InterPro" id="IPR050148">
    <property type="entry name" value="Terpene_synthase-like"/>
</dbReference>
<dbReference type="InterPro" id="IPR005630">
    <property type="entry name" value="Terpene_synthase_metal-bd"/>
</dbReference>
<dbReference type="InterPro" id="IPR008930">
    <property type="entry name" value="Terpenoid_cyclase/PrenylTrfase"/>
</dbReference>
<dbReference type="PANTHER" id="PTHR31225:SF93">
    <property type="entry name" value="ALPHA-HUMULENE_(-)-(E)-BETA-CARYOPHYLLENE SYNTHASE"/>
    <property type="match status" value="1"/>
</dbReference>
<dbReference type="PANTHER" id="PTHR31225">
    <property type="entry name" value="OS04G0344100 PROTEIN-RELATED"/>
    <property type="match status" value="1"/>
</dbReference>
<dbReference type="Pfam" id="PF01397">
    <property type="entry name" value="Terpene_synth"/>
    <property type="match status" value="1"/>
</dbReference>
<dbReference type="Pfam" id="PF03936">
    <property type="entry name" value="Terpene_synth_C"/>
    <property type="match status" value="1"/>
</dbReference>
<dbReference type="SFLD" id="SFLDS00005">
    <property type="entry name" value="Isoprenoid_Synthase_Type_I"/>
    <property type="match status" value="1"/>
</dbReference>
<dbReference type="SFLD" id="SFLDG01019">
    <property type="entry name" value="Terpene_Cyclase_Like_1_C_Termi"/>
    <property type="match status" value="1"/>
</dbReference>
<dbReference type="SUPFAM" id="SSF48239">
    <property type="entry name" value="Terpenoid cyclases/Protein prenyltransferases"/>
    <property type="match status" value="1"/>
</dbReference>
<dbReference type="SUPFAM" id="SSF48576">
    <property type="entry name" value="Terpenoid synthases"/>
    <property type="match status" value="1"/>
</dbReference>
<keyword id="KW-0150">Chloroplast</keyword>
<keyword id="KW-0456">Lyase</keyword>
<keyword id="KW-0460">Magnesium</keyword>
<keyword id="KW-0479">Metal-binding</keyword>
<keyword id="KW-0934">Plastid</keyword>
<accession>T1RRJ6</accession>
<proteinExistence type="evidence at protein level"/>
<gene>
    <name evidence="5" type="primary">GEAS</name>
</gene>
<organism>
    <name type="scientific">Lavandula viridis</name>
    <name type="common">Green lavender</name>
    <dbReference type="NCBI Taxonomy" id="1343918"/>
    <lineage>
        <taxon>Eukaryota</taxon>
        <taxon>Viridiplantae</taxon>
        <taxon>Streptophyta</taxon>
        <taxon>Embryophyta</taxon>
        <taxon>Tracheophyta</taxon>
        <taxon>Spermatophyta</taxon>
        <taxon>Magnoliopsida</taxon>
        <taxon>eudicotyledons</taxon>
        <taxon>Gunneridae</taxon>
        <taxon>Pentapetalae</taxon>
        <taxon>asterids</taxon>
        <taxon>lamiids</taxon>
        <taxon>Lamiales</taxon>
        <taxon>Lamiaceae</taxon>
        <taxon>Nepetoideae</taxon>
        <taxon>Ocimeae</taxon>
        <taxon>Lavandulinae</taxon>
        <taxon>Lavandula</taxon>
    </lineage>
</organism>